<organism>
    <name type="scientific">Homo sapiens</name>
    <name type="common">Human</name>
    <dbReference type="NCBI Taxonomy" id="9606"/>
    <lineage>
        <taxon>Eukaryota</taxon>
        <taxon>Metazoa</taxon>
        <taxon>Chordata</taxon>
        <taxon>Craniata</taxon>
        <taxon>Vertebrata</taxon>
        <taxon>Euteleostomi</taxon>
        <taxon>Mammalia</taxon>
        <taxon>Eutheria</taxon>
        <taxon>Euarchontoglires</taxon>
        <taxon>Primates</taxon>
        <taxon>Haplorrhini</taxon>
        <taxon>Catarrhini</taxon>
        <taxon>Hominidae</taxon>
        <taxon>Homo</taxon>
    </lineage>
</organism>
<comment type="function">
    <text evidence="1">Modulates the assembly and organization of the microtubule cytoskeleton, and probably plays a role in regulating the orientation of the mitotic spindle and the orientation of the plane of cell division. Required for normal proliferation of neuronal progenitor cells in the developing brain and for normal brain development. Does not affect neuron migration per se.</text>
</comment>
<comment type="subunit">
    <text evidence="1 2 7 8 9">Homotrimer; self-association is mediated by the N-terminal coiled coil (By similarity). Does not interact with EML3 (PubMed:25740311). Binds repolymerizing microtubules (PubMed:24859200). Binds unpolymerized tubulins via its WD repeat region (PubMed:24706829). Interacts with TASOR (By similarity).</text>
</comment>
<comment type="interaction">
    <interactant intactId="EBI-751327">
        <id>O00423</id>
    </interactant>
    <interactant intactId="EBI-718729">
        <id>P55212</id>
        <label>CASP6</label>
    </interactant>
    <organismsDiffer>false</organismsDiffer>
    <experiments>3</experiments>
</comment>
<comment type="interaction">
    <interactant intactId="EBI-751327">
        <id>O00423</id>
    </interactant>
    <interactant intactId="EBI-713291">
        <id>P51114</id>
        <label>FXR1</label>
    </interactant>
    <organismsDiffer>false</organismsDiffer>
    <experiments>2</experiments>
</comment>
<comment type="interaction">
    <interactant intactId="EBI-751327">
        <id>O00423</id>
    </interactant>
    <interactant intactId="EBI-751335">
        <id>Q9H9L3</id>
        <label>ISG20L2</label>
    </interactant>
    <organismsDiffer>false</organismsDiffer>
    <experiments>3</experiments>
</comment>
<comment type="interaction">
    <interactant intactId="EBI-751327">
        <id>O00423</id>
    </interactant>
    <interactant intactId="EBI-21591415">
        <id>P13473-2</id>
        <label>LAMP2</label>
    </interactant>
    <organismsDiffer>false</organismsDiffer>
    <experiments>3</experiments>
</comment>
<comment type="interaction">
    <interactant intactId="EBI-751327">
        <id>O00423</id>
    </interactant>
    <interactant intactId="EBI-357298">
        <id>Q9Y266</id>
        <label>NUDC</label>
    </interactant>
    <organismsDiffer>false</organismsDiffer>
    <experiments>2</experiments>
</comment>
<comment type="interaction">
    <interactant intactId="EBI-751327">
        <id>O00423</id>
    </interactant>
    <interactant intactId="EBI-1054052">
        <id>P31948</id>
        <label>STIP1</label>
    </interactant>
    <organismsDiffer>false</organismsDiffer>
    <experiments>3</experiments>
</comment>
<comment type="subcellular location">
    <subcellularLocation>
        <location evidence="1">Cytoplasm</location>
    </subcellularLocation>
    <subcellularLocation>
        <location evidence="1">Cytoplasm</location>
        <location evidence="1">Perinuclear region</location>
    </subcellularLocation>
    <subcellularLocation>
        <location evidence="8 9">Cytoplasm</location>
        <location evidence="8 9">Cytoskeleton</location>
    </subcellularLocation>
    <text evidence="1 8 9">Detected in cytoplasmic punctae. Co-localizes with microtubules (PubMed:24859200, PubMed:25740311). Enriched in perinuclear regions during interphase and in the region of spindle microtubules during metaphase. Enriched at the midzone during telophase and cytokinesis. Detected at growth cones in neurons (By similarity).</text>
</comment>
<comment type="alternative products">
    <event type="alternative splicing"/>
    <isoform>
        <id>O00423-1</id>
        <name>1</name>
        <sequence type="displayed"/>
    </isoform>
    <isoform>
        <id>O00423-3</id>
        <name>3</name>
        <sequence type="described" ref="VSP_024476"/>
    </isoform>
</comment>
<comment type="tissue specificity">
    <text evidence="5">Ubiquitous; expressed in most tissues with the exception of thymus and peripheral blood lymphocytes.</text>
</comment>
<comment type="domain">
    <text evidence="7">Contains a tandem atypical propeller in EMLs (TAPE) domain. The N-terminal beta-propeller is formed by canonical WD repeats; in contrast, the second beta-propeller contains one blade that is formed by discontinuous parts of the polypeptide chain.</text>
</comment>
<comment type="domain">
    <text evidence="9">The N-terminal coiled coil is required for association with microtubules.</text>
</comment>
<comment type="disease" evidence="8 10">
    <disease id="DI-04829">
        <name>Band heterotopia</name>
        <acronym>BH</acronym>
        <description>A brain malformation of the lissencephaly spectrum, resulting from disordered neuronal migration and characterized by bands of gray matter interposed in the central white matter. Disease features include severe developmental delay with intellectual disability, enlarged head circumference, periventricular and ribbon-like subcortical heterotopia, polymicrogyria and agenesis of the corpus callosum.</description>
        <dbReference type="MIM" id="600348"/>
    </disease>
    <text>The disease is caused by variants affecting the gene represented in this entry.</text>
</comment>
<comment type="similarity">
    <text evidence="14">Belongs to the WD repeat EMAP family.</text>
</comment>
<comment type="sequence caution" evidence="14">
    <conflict type="frameshift">
        <sequence resource="EMBL-CDS" id="AAB57824"/>
    </conflict>
</comment>
<comment type="sequence caution" evidence="14">
    <conflict type="erroneous initiation">
        <sequence resource="EMBL-CDS" id="CAD62313"/>
    </conflict>
    <text>Extended N-terminus.</text>
</comment>
<name>EMAL1_HUMAN</name>
<gene>
    <name type="primary">EML1</name>
    <name type="synonym">EMAP1</name>
    <name type="synonym">EMAPL</name>
    <name type="synonym">EMAPL1</name>
</gene>
<accession>O00423</accession>
<accession>Q86U15</accession>
<accession>Q8N536</accession>
<accession>Q8N5C4</accession>
<accession>Q8WWL6</accession>
<sequence>MEDGFSSYSSLYDTSSLLQFCNDDSASAASSMEVTDRIASLEQRVQMQEDDIQLLKSALADVVRRLNITEEQQAVLNRKGPTKARPLMQTLPLRTTVNNGTVLPKKPTGSLPSPSGVRKETAVPATKSNIKRTSSSERVSPGGRRESNGDSRGNRNRTGSTSSSSSGKKNSESKPKEPVFSAEEGYVKMFLRGRPVTMYMPKDQVDSYSLEAKVELPTKRLKLEWVYGYRGRDCRNNLYLLPTGETVYFIASVVVLYNVEEQLQRHYAGHNDDVKCLAVHPDRITIATGQVAGTSKDGKQLPPHVRIWDSVTLNTLHVIGIGFFDRAVTCIAFSKSNGGTNLCAVDDSNDHVLSVWDWQKEEKLADVKCSNEAVFAADFHPTDTNIIVTCGKSHLYFWTLEGSSLNKKQGLFEKQEKPKFVLCVTFSENGDTITGDSSGNILVWGKGTNRISYAVQGAHEGGIFALCMLRDGTLVSGGGKDRKLISWSGNYQKLRKTEIPEQFGPIRTVAEGKGDVILIGTTRNFVLQGTLSGDFTPITQGHTDELWGLAIHASKSQFLTCGHDKHATLWDAVGHRPVWDKIIEDPAQSSGFHPSGSVVAVGTLTGRWFVFDTETKDLVTVHTDGNEQLSVMRYSPDGNFLAIGSHDNCIYIYGVSDNGRKYTRVGKCSGHSSFITHLDWSVNSQFLVSNSGDYEILYWVPSACKQVVSVETTRDIEWATYTCTLGFHVFGVWPEGSDGTDINAVCRAHEKKLLSTGDDFGKVHLFSYPCSQFRAPSHIYGGHSSHVTNVDFLCEDSHLISTGGKDTSIMQWRVI</sequence>
<feature type="chain" id="PRO_0000050961" description="Echinoderm microtubule-associated protein-like 1">
    <location>
        <begin position="1"/>
        <end position="815"/>
    </location>
</feature>
<feature type="repeat" description="WD 1">
    <location>
        <begin position="261"/>
        <end position="310"/>
    </location>
</feature>
<feature type="repeat" description="WD 2">
    <location>
        <begin position="315"/>
        <end position="358"/>
    </location>
</feature>
<feature type="repeat" description="WD 3">
    <location>
        <begin position="363"/>
        <end position="400"/>
    </location>
</feature>
<feature type="repeat" description="WD 4">
    <location>
        <begin position="409"/>
        <end position="446"/>
    </location>
</feature>
<feature type="repeat" description="WD 5">
    <location>
        <begin position="450"/>
        <end position="489"/>
    </location>
</feature>
<feature type="repeat" description="WD 6">
    <location>
        <begin position="493"/>
        <end position="530"/>
    </location>
</feature>
<feature type="repeat" description="WD 7">
    <location>
        <begin position="535"/>
        <end position="572"/>
    </location>
</feature>
<feature type="repeat" description="WD 8">
    <location>
        <begin position="578"/>
        <end position="613"/>
    </location>
</feature>
<feature type="repeat" description="WD 9">
    <location>
        <begin position="617"/>
        <end position="655"/>
    </location>
</feature>
<feature type="repeat" description="WD 10">
    <location>
        <begin position="664"/>
        <end position="701"/>
    </location>
</feature>
<feature type="repeat" description="WD 11">
    <location>
        <begin position="709"/>
        <end position="768"/>
    </location>
</feature>
<feature type="repeat" description="WD 12">
    <location>
        <begin position="775"/>
        <end position="814"/>
    </location>
</feature>
<feature type="region of interest" description="Disordered" evidence="4">
    <location>
        <begin position="77"/>
        <end position="179"/>
    </location>
</feature>
<feature type="region of interest" description="Tandem atypical propeller in EMLs">
    <location>
        <begin position="176"/>
        <end position="815"/>
    </location>
</feature>
<feature type="coiled-coil region" evidence="3">
    <location>
        <begin position="31"/>
        <end position="72"/>
    </location>
</feature>
<feature type="compositionally biased region" description="Polar residues" evidence="4">
    <location>
        <begin position="92"/>
        <end position="101"/>
    </location>
</feature>
<feature type="compositionally biased region" description="Polar residues" evidence="4">
    <location>
        <begin position="126"/>
        <end position="138"/>
    </location>
</feature>
<feature type="compositionally biased region" description="Basic and acidic residues" evidence="4">
    <location>
        <begin position="143"/>
        <end position="153"/>
    </location>
</feature>
<feature type="compositionally biased region" description="Low complexity" evidence="4">
    <location>
        <begin position="156"/>
        <end position="168"/>
    </location>
</feature>
<feature type="modified residue" description="Phosphoserine" evidence="15">
    <location>
        <position position="113"/>
    </location>
</feature>
<feature type="splice variant" id="VSP_024476" description="In isoform 3." evidence="13">
    <original>K</original>
    <variation>KRLNRSVSLLNACKLNRSTP</variation>
    <location>
        <position position="127"/>
    </location>
</feature>
<feature type="sequence variant" id="VAR_071075" description="In BH; dbSNP:rs886037937." evidence="8">
    <original>W</original>
    <variation>R</variation>
    <location>
        <position position="225"/>
    </location>
</feature>
<feature type="sequence variant" id="VAR_071076" description="In BH; decreased microtubule-binding; dbSNP:rs886037936." evidence="8">
    <original>T</original>
    <variation>A</variation>
    <location>
        <position position="243"/>
    </location>
</feature>
<feature type="sequence variant" id="VAR_031720" description="In dbSNP:rs34198557.">
    <original>A</original>
    <variation>V</variation>
    <location>
        <position position="377"/>
    </location>
</feature>
<feature type="sequence variant" id="VAR_081119" description="In BH." evidence="10">
    <location>
        <begin position="523"/>
        <end position="815"/>
    </location>
</feature>
<feature type="sequence variant" id="VAR_031721" description="In dbSNP:rs17853154." evidence="6">
    <original>H</original>
    <variation>N</variation>
    <location>
        <position position="552"/>
    </location>
</feature>
<feature type="sequence variant" id="VAR_031722" description="In dbSNP:rs2250718." evidence="6 11 12">
    <original>S</original>
    <variation>P</variation>
    <location>
        <position position="556"/>
    </location>
</feature>
<feature type="mutagenesis site" description="No effect on tubulin binding. Does not disrupt self-association. Decreased association with microtubules." evidence="7 9">
    <original>LAD</original>
    <variation>AAA</variation>
    <location>
        <begin position="59"/>
        <end position="61"/>
    </location>
</feature>
<feature type="mutagenesis site" description="Abolishes tubulin binding; when associated with S-194; A-547; T-626; S-627; A-646 and A-786." evidence="7">
    <original>R</original>
    <variation>S</variation>
    <location>
        <position position="192"/>
    </location>
</feature>
<feature type="mutagenesis site" description="Abolishes tubulin binding; when associated with S-192; A-547; T-626; S-627; A-646 and A-786." evidence="7">
    <original>R</original>
    <variation>S</variation>
    <location>
        <position position="194"/>
    </location>
</feature>
<feature type="mutagenesis site" description="Abolishes tubulin binding; when associated with S-192; S-194; T-626; S-627; A-646 and A-786." evidence="7">
    <original>W</original>
    <variation>A</variation>
    <location>
        <position position="547"/>
    </location>
</feature>
<feature type="mutagenesis site" description="Abolishes tubulin binding; when associated with S-192; S-194; A-547; S-627; A-646 and A-786." evidence="7">
    <original>N</original>
    <variation>T</variation>
    <location>
        <position position="626"/>
    </location>
</feature>
<feature type="mutagenesis site" description="Abolishes tubulin binding; when associated with S-192; S-194; A-547; T-626; A-646 and A-786." evidence="7">
    <original>E</original>
    <variation>S</variation>
    <location>
        <position position="627"/>
    </location>
</feature>
<feature type="mutagenesis site" description="Abolishes tubulin binding; when associated with S-192; S-194; A-547; T-626; S-627 and A-786." evidence="7">
    <original>H</original>
    <variation>A</variation>
    <location>
        <position position="646"/>
    </location>
</feature>
<feature type="mutagenesis site" description="Abolishes tubulin binding; when associated with S-192; S-194; A-547; T-626; S-627 and A-646." evidence="7">
    <original>H</original>
    <variation>A</variation>
    <location>
        <position position="786"/>
    </location>
</feature>
<feature type="sequence conflict" description="In Ref. 1; AAB57824." evidence="14" ref="1">
    <original>LRT</original>
    <variation>FRS</variation>
    <location>
        <begin position="93"/>
        <end position="95"/>
    </location>
</feature>
<feature type="sequence conflict" description="In Ref. 1; AAB57824." evidence="14" ref="1">
    <original>K</original>
    <variation>I</variation>
    <location>
        <position position="106"/>
    </location>
</feature>
<feature type="sequence conflict" description="In Ref. 1; AAB57824." evidence="14" ref="1">
    <original>V</original>
    <variation>F</variation>
    <location>
        <position position="117"/>
    </location>
</feature>
<feature type="sequence conflict" description="In Ref. 1; AAB57824." evidence="14" ref="1">
    <original>E</original>
    <variation>D</variation>
    <location>
        <position position="120"/>
    </location>
</feature>
<feature type="sequence conflict" description="In Ref. 1; AAB57824." evidence="14" ref="1">
    <original>M</original>
    <variation>L</variation>
    <location>
        <position position="189"/>
    </location>
</feature>
<feature type="sequence conflict" description="In Ref. 1; AAB57824 and 2; CAD12600." evidence="14" ref="1 2">
    <original>FA</original>
    <variation>SP</variation>
    <location>
        <begin position="464"/>
        <end position="465"/>
    </location>
</feature>
<feature type="sequence conflict" description="In Ref. 4; CAD62313." evidence="14" ref="4">
    <original>IP</original>
    <variation>VS</variation>
    <location>
        <begin position="499"/>
        <end position="500"/>
    </location>
</feature>
<feature type="strand" evidence="16">
    <location>
        <begin position="179"/>
        <end position="181"/>
    </location>
</feature>
<feature type="turn" evidence="16">
    <location>
        <begin position="182"/>
        <end position="185"/>
    </location>
</feature>
<feature type="strand" evidence="16">
    <location>
        <begin position="186"/>
        <end position="199"/>
    </location>
</feature>
<feature type="helix" evidence="16">
    <location>
        <begin position="202"/>
        <end position="205"/>
    </location>
</feature>
<feature type="strand" evidence="16">
    <location>
        <begin position="220"/>
        <end position="227"/>
    </location>
</feature>
<feature type="strand" evidence="16">
    <location>
        <begin position="238"/>
        <end position="240"/>
    </location>
</feature>
<feature type="strand" evidence="16">
    <location>
        <begin position="246"/>
        <end position="250"/>
    </location>
</feature>
<feature type="strand" evidence="16">
    <location>
        <begin position="253"/>
        <end position="258"/>
    </location>
</feature>
<feature type="turn" evidence="16">
    <location>
        <begin position="259"/>
        <end position="262"/>
    </location>
</feature>
<feature type="strand" evidence="16">
    <location>
        <begin position="263"/>
        <end position="267"/>
    </location>
</feature>
<feature type="strand" evidence="16">
    <location>
        <begin position="274"/>
        <end position="279"/>
    </location>
</feature>
<feature type="strand" evidence="16">
    <location>
        <begin position="283"/>
        <end position="291"/>
    </location>
</feature>
<feature type="strand" evidence="16">
    <location>
        <begin position="305"/>
        <end position="309"/>
    </location>
</feature>
<feature type="turn" evidence="16">
    <location>
        <begin position="310"/>
        <end position="312"/>
    </location>
</feature>
<feature type="strand" evidence="16">
    <location>
        <begin position="315"/>
        <end position="319"/>
    </location>
</feature>
<feature type="turn" evidence="16">
    <location>
        <begin position="321"/>
        <end position="323"/>
    </location>
</feature>
<feature type="strand" evidence="16">
    <location>
        <begin position="326"/>
        <end position="333"/>
    </location>
</feature>
<feature type="strand" evidence="16">
    <location>
        <begin position="335"/>
        <end position="339"/>
    </location>
</feature>
<feature type="strand" evidence="16">
    <location>
        <begin position="342"/>
        <end position="346"/>
    </location>
</feature>
<feature type="strand" evidence="16">
    <location>
        <begin position="348"/>
        <end position="350"/>
    </location>
</feature>
<feature type="strand" evidence="16">
    <location>
        <begin position="352"/>
        <end position="357"/>
    </location>
</feature>
<feature type="helix" evidence="16">
    <location>
        <begin position="358"/>
        <end position="360"/>
    </location>
</feature>
<feature type="strand" evidence="16">
    <location>
        <begin position="362"/>
        <end position="368"/>
    </location>
</feature>
<feature type="strand" evidence="16">
    <location>
        <begin position="374"/>
        <end position="379"/>
    </location>
</feature>
<feature type="strand" evidence="16">
    <location>
        <begin position="386"/>
        <end position="392"/>
    </location>
</feature>
<feature type="strand" evidence="16">
    <location>
        <begin position="394"/>
        <end position="401"/>
    </location>
</feature>
<feature type="strand" evidence="16">
    <location>
        <begin position="404"/>
        <end position="409"/>
    </location>
</feature>
<feature type="strand" evidence="16">
    <location>
        <begin position="419"/>
        <end position="426"/>
    </location>
</feature>
<feature type="strand" evidence="16">
    <location>
        <begin position="432"/>
        <end position="436"/>
    </location>
</feature>
<feature type="strand" evidence="16">
    <location>
        <begin position="441"/>
        <end position="444"/>
    </location>
</feature>
<feature type="strand" evidence="16">
    <location>
        <begin position="449"/>
        <end position="455"/>
    </location>
</feature>
<feature type="strand" evidence="16">
    <location>
        <begin position="458"/>
        <end position="461"/>
    </location>
</feature>
<feature type="strand" evidence="16">
    <location>
        <begin position="463"/>
        <end position="468"/>
    </location>
</feature>
<feature type="strand" evidence="16">
    <location>
        <begin position="474"/>
        <end position="478"/>
    </location>
</feature>
<feature type="turn" evidence="16">
    <location>
        <begin position="479"/>
        <end position="481"/>
    </location>
</feature>
<feature type="strand" evidence="16">
    <location>
        <begin position="483"/>
        <end position="487"/>
    </location>
</feature>
<feature type="strand" evidence="16">
    <location>
        <begin position="493"/>
        <end position="498"/>
    </location>
</feature>
<feature type="turn" evidence="16">
    <location>
        <begin position="501"/>
        <end position="503"/>
    </location>
</feature>
<feature type="strand" evidence="16">
    <location>
        <begin position="505"/>
        <end position="511"/>
    </location>
</feature>
<feature type="strand" evidence="16">
    <location>
        <begin position="517"/>
        <end position="521"/>
    </location>
</feature>
<feature type="strand" evidence="16">
    <location>
        <begin position="526"/>
        <end position="529"/>
    </location>
</feature>
<feature type="strand" evidence="16">
    <location>
        <begin position="536"/>
        <end position="539"/>
    </location>
</feature>
<feature type="strand" evidence="16">
    <location>
        <begin position="546"/>
        <end position="551"/>
    </location>
</feature>
<feature type="strand" evidence="16">
    <location>
        <begin position="553"/>
        <end position="562"/>
    </location>
</feature>
<feature type="strand" evidence="16">
    <location>
        <begin position="565"/>
        <end position="571"/>
    </location>
</feature>
<feature type="turn" evidence="16">
    <location>
        <begin position="572"/>
        <end position="575"/>
    </location>
</feature>
<feature type="strand" evidence="16">
    <location>
        <begin position="576"/>
        <end position="582"/>
    </location>
</feature>
<feature type="strand" evidence="16">
    <location>
        <begin position="587"/>
        <end position="592"/>
    </location>
</feature>
<feature type="strand" evidence="16">
    <location>
        <begin position="596"/>
        <end position="612"/>
    </location>
</feature>
<feature type="turn" evidence="16">
    <location>
        <begin position="613"/>
        <end position="615"/>
    </location>
</feature>
<feature type="strand" evidence="16">
    <location>
        <begin position="618"/>
        <end position="623"/>
    </location>
</feature>
<feature type="strand" evidence="16">
    <location>
        <begin position="625"/>
        <end position="627"/>
    </location>
</feature>
<feature type="strand" evidence="16">
    <location>
        <begin position="629"/>
        <end position="634"/>
    </location>
</feature>
<feature type="strand" evidence="16">
    <location>
        <begin position="638"/>
        <end position="645"/>
    </location>
</feature>
<feature type="strand" evidence="16">
    <location>
        <begin position="650"/>
        <end position="656"/>
    </location>
</feature>
<feature type="turn" evidence="16">
    <location>
        <begin position="657"/>
        <end position="660"/>
    </location>
</feature>
<feature type="strand" evidence="16">
    <location>
        <begin position="661"/>
        <end position="668"/>
    </location>
</feature>
<feature type="strand" evidence="16">
    <location>
        <begin position="675"/>
        <end position="681"/>
    </location>
</feature>
<feature type="strand" evidence="16">
    <location>
        <begin position="687"/>
        <end position="691"/>
    </location>
</feature>
<feature type="strand" evidence="16">
    <location>
        <begin position="697"/>
        <end position="700"/>
    </location>
</feature>
<feature type="helix" evidence="16">
    <location>
        <begin position="701"/>
        <end position="703"/>
    </location>
</feature>
<feature type="helix" evidence="16">
    <location>
        <begin position="710"/>
        <end position="713"/>
    </location>
</feature>
<feature type="strand" evidence="16">
    <location>
        <begin position="724"/>
        <end position="726"/>
    </location>
</feature>
<feature type="turn" evidence="16">
    <location>
        <begin position="727"/>
        <end position="731"/>
    </location>
</feature>
<feature type="strand" evidence="16">
    <location>
        <begin position="741"/>
        <end position="747"/>
    </location>
</feature>
<feature type="strand" evidence="16">
    <location>
        <begin position="749"/>
        <end position="758"/>
    </location>
</feature>
<feature type="strand" evidence="16">
    <location>
        <begin position="763"/>
        <end position="768"/>
    </location>
</feature>
<feature type="strand" evidence="16">
    <location>
        <begin position="772"/>
        <end position="774"/>
    </location>
</feature>
<feature type="strand" evidence="16">
    <location>
        <begin position="778"/>
        <end position="780"/>
    </location>
</feature>
<feature type="strand" evidence="16">
    <location>
        <begin position="789"/>
        <end position="792"/>
    </location>
</feature>
<feature type="strand" evidence="16">
    <location>
        <begin position="796"/>
        <end position="802"/>
    </location>
</feature>
<feature type="strand" evidence="16">
    <location>
        <begin position="809"/>
        <end position="815"/>
    </location>
</feature>
<protein>
    <recommendedName>
        <fullName>Echinoderm microtubule-associated protein-like 1</fullName>
        <shortName>EMAP-1</shortName>
        <shortName>HuEMAP-1</shortName>
    </recommendedName>
</protein>
<dbReference type="EMBL" id="U97018">
    <property type="protein sequence ID" value="AAB57824.1"/>
    <property type="status" value="ALT_FRAME"/>
    <property type="molecule type" value="mRNA"/>
</dbReference>
<dbReference type="EMBL" id="AJ420603">
    <property type="protein sequence ID" value="CAD12600.2"/>
    <property type="molecule type" value="Genomic_DNA"/>
</dbReference>
<dbReference type="EMBL" id="AJ428183">
    <property type="protein sequence ID" value="CAD12600.2"/>
    <property type="status" value="JOINED"/>
    <property type="molecule type" value="Genomic_DNA"/>
</dbReference>
<dbReference type="EMBL" id="AJ428184">
    <property type="protein sequence ID" value="CAD12600.2"/>
    <property type="status" value="JOINED"/>
    <property type="molecule type" value="Genomic_DNA"/>
</dbReference>
<dbReference type="EMBL" id="AJ428185">
    <property type="protein sequence ID" value="CAD12600.2"/>
    <property type="status" value="JOINED"/>
    <property type="molecule type" value="Genomic_DNA"/>
</dbReference>
<dbReference type="EMBL" id="AJ428189">
    <property type="protein sequence ID" value="CAD12600.2"/>
    <property type="status" value="JOINED"/>
    <property type="molecule type" value="Genomic_DNA"/>
</dbReference>
<dbReference type="EMBL" id="AJ428191">
    <property type="protein sequence ID" value="CAD12600.2"/>
    <property type="status" value="JOINED"/>
    <property type="molecule type" value="Genomic_DNA"/>
</dbReference>
<dbReference type="EMBL" id="AJ428193">
    <property type="protein sequence ID" value="CAD12600.2"/>
    <property type="status" value="JOINED"/>
    <property type="molecule type" value="Genomic_DNA"/>
</dbReference>
<dbReference type="EMBL" id="AJ428195">
    <property type="protein sequence ID" value="CAD12600.2"/>
    <property type="status" value="JOINED"/>
    <property type="molecule type" value="Genomic_DNA"/>
</dbReference>
<dbReference type="EMBL" id="AJ428197">
    <property type="protein sequence ID" value="CAD12600.2"/>
    <property type="status" value="JOINED"/>
    <property type="molecule type" value="Genomic_DNA"/>
</dbReference>
<dbReference type="EMBL" id="AJ496645">
    <property type="protein sequence ID" value="CAD12600.2"/>
    <property type="status" value="JOINED"/>
    <property type="molecule type" value="Genomic_DNA"/>
</dbReference>
<dbReference type="EMBL" id="AJ496644">
    <property type="protein sequence ID" value="CAD12600.2"/>
    <property type="status" value="JOINED"/>
    <property type="molecule type" value="Genomic_DNA"/>
</dbReference>
<dbReference type="EMBL" id="AJ428200">
    <property type="protein sequence ID" value="CAD12600.2"/>
    <property type="status" value="JOINED"/>
    <property type="molecule type" value="Genomic_DNA"/>
</dbReference>
<dbReference type="EMBL" id="AJ428199">
    <property type="protein sequence ID" value="CAD12600.2"/>
    <property type="status" value="JOINED"/>
    <property type="molecule type" value="Genomic_DNA"/>
</dbReference>
<dbReference type="EMBL" id="AJ428198">
    <property type="protein sequence ID" value="CAD12600.2"/>
    <property type="status" value="JOINED"/>
    <property type="molecule type" value="Genomic_DNA"/>
</dbReference>
<dbReference type="EMBL" id="AJ428196">
    <property type="protein sequence ID" value="CAD12600.2"/>
    <property type="status" value="JOINED"/>
    <property type="molecule type" value="Genomic_DNA"/>
</dbReference>
<dbReference type="EMBL" id="AJ428194">
    <property type="protein sequence ID" value="CAD12600.2"/>
    <property type="status" value="JOINED"/>
    <property type="molecule type" value="Genomic_DNA"/>
</dbReference>
<dbReference type="EMBL" id="AJ428192">
    <property type="protein sequence ID" value="CAD12600.2"/>
    <property type="status" value="JOINED"/>
    <property type="molecule type" value="Genomic_DNA"/>
</dbReference>
<dbReference type="EMBL" id="AJ428190">
    <property type="protein sequence ID" value="CAD12600.2"/>
    <property type="status" value="JOINED"/>
    <property type="molecule type" value="Genomic_DNA"/>
</dbReference>
<dbReference type="EMBL" id="AJ428188">
    <property type="protein sequence ID" value="CAD12600.2"/>
    <property type="status" value="JOINED"/>
    <property type="molecule type" value="Genomic_DNA"/>
</dbReference>
<dbReference type="EMBL" id="AJ428187">
    <property type="protein sequence ID" value="CAD12600.2"/>
    <property type="status" value="JOINED"/>
    <property type="molecule type" value="Genomic_DNA"/>
</dbReference>
<dbReference type="EMBL" id="AJ428186">
    <property type="protein sequence ID" value="CAD12600.2"/>
    <property type="status" value="JOINED"/>
    <property type="molecule type" value="Genomic_DNA"/>
</dbReference>
<dbReference type="EMBL" id="BC032541">
    <property type="protein sequence ID" value="AAH32541.1"/>
    <property type="molecule type" value="mRNA"/>
</dbReference>
<dbReference type="EMBL" id="BC033043">
    <property type="protein sequence ID" value="AAH33043.1"/>
    <property type="molecule type" value="mRNA"/>
</dbReference>
<dbReference type="EMBL" id="BX247979">
    <property type="protein sequence ID" value="CAD62313.1"/>
    <property type="status" value="ALT_INIT"/>
    <property type="molecule type" value="mRNA"/>
</dbReference>
<dbReference type="CCDS" id="CCDS32154.1">
    <molecule id="O00423-3"/>
</dbReference>
<dbReference type="CCDS" id="CCDS32155.1">
    <molecule id="O00423-1"/>
</dbReference>
<dbReference type="RefSeq" id="NP_001008707.1">
    <molecule id="O00423-3"/>
    <property type="nucleotide sequence ID" value="NM_001008707.2"/>
</dbReference>
<dbReference type="RefSeq" id="NP_004425.2">
    <molecule id="O00423-1"/>
    <property type="nucleotide sequence ID" value="NM_004434.3"/>
</dbReference>
<dbReference type="PDB" id="4CI8">
    <property type="method" value="X-ray"/>
    <property type="resolution" value="2.60 A"/>
    <property type="chains" value="A/B=167-815"/>
</dbReference>
<dbReference type="PDBsum" id="4CI8"/>
<dbReference type="SMR" id="O00423"/>
<dbReference type="BioGRID" id="108324">
    <property type="interactions" value="34"/>
</dbReference>
<dbReference type="FunCoup" id="O00423">
    <property type="interactions" value="421"/>
</dbReference>
<dbReference type="IntAct" id="O00423">
    <property type="interactions" value="20"/>
</dbReference>
<dbReference type="MINT" id="O00423"/>
<dbReference type="STRING" id="9606.ENSP00000334314"/>
<dbReference type="GlyGen" id="O00423">
    <property type="glycosylation" value="1 site, 1 O-linked glycan (1 site)"/>
</dbReference>
<dbReference type="iPTMnet" id="O00423"/>
<dbReference type="PhosphoSitePlus" id="O00423"/>
<dbReference type="BioMuta" id="EML1"/>
<dbReference type="CPTAC" id="CPTAC-1606"/>
<dbReference type="jPOST" id="O00423"/>
<dbReference type="MassIVE" id="O00423"/>
<dbReference type="PaxDb" id="9606-ENSP00000334314"/>
<dbReference type="PeptideAtlas" id="O00423"/>
<dbReference type="ProteomicsDB" id="47880">
    <molecule id="O00423-1"/>
</dbReference>
<dbReference type="ProteomicsDB" id="47881">
    <molecule id="O00423-3"/>
</dbReference>
<dbReference type="Antibodypedia" id="27460">
    <property type="antibodies" value="80 antibodies from 25 providers"/>
</dbReference>
<dbReference type="DNASU" id="2009"/>
<dbReference type="Ensembl" id="ENST00000262233.11">
    <molecule id="O00423-1"/>
    <property type="protein sequence ID" value="ENSP00000262233.7"/>
    <property type="gene ID" value="ENSG00000066629.19"/>
</dbReference>
<dbReference type="Ensembl" id="ENST00000334192.8">
    <molecule id="O00423-3"/>
    <property type="protein sequence ID" value="ENSP00000334314.4"/>
    <property type="gene ID" value="ENSG00000066629.19"/>
</dbReference>
<dbReference type="GeneID" id="2009"/>
<dbReference type="KEGG" id="hsa:2009"/>
<dbReference type="MANE-Select" id="ENST00000262233.11">
    <property type="protein sequence ID" value="ENSP00000262233.7"/>
    <property type="RefSeq nucleotide sequence ID" value="NM_004434.3"/>
    <property type="RefSeq protein sequence ID" value="NP_004425.2"/>
</dbReference>
<dbReference type="UCSC" id="uc001ygr.4">
    <molecule id="O00423-1"/>
    <property type="organism name" value="human"/>
</dbReference>
<dbReference type="AGR" id="HGNC:3330"/>
<dbReference type="CTD" id="2009"/>
<dbReference type="DisGeNET" id="2009"/>
<dbReference type="GeneCards" id="EML1"/>
<dbReference type="HGNC" id="HGNC:3330">
    <property type="gene designation" value="EML1"/>
</dbReference>
<dbReference type="HPA" id="ENSG00000066629">
    <property type="expression patterns" value="Low tissue specificity"/>
</dbReference>
<dbReference type="MalaCards" id="EML1"/>
<dbReference type="MIM" id="600348">
    <property type="type" value="phenotype"/>
</dbReference>
<dbReference type="MIM" id="602033">
    <property type="type" value="gene"/>
</dbReference>
<dbReference type="neXtProt" id="NX_O00423"/>
<dbReference type="OpenTargets" id="ENSG00000066629"/>
<dbReference type="Orphanet" id="99796">
    <property type="disease" value="Subcortical band heterotopia"/>
</dbReference>
<dbReference type="PharmGKB" id="PA27767"/>
<dbReference type="VEuPathDB" id="HostDB:ENSG00000066629"/>
<dbReference type="eggNOG" id="KOG2106">
    <property type="taxonomic scope" value="Eukaryota"/>
</dbReference>
<dbReference type="GeneTree" id="ENSGT00940000153887"/>
<dbReference type="InParanoid" id="O00423"/>
<dbReference type="OMA" id="DIQWFTH"/>
<dbReference type="OrthoDB" id="47802at2759"/>
<dbReference type="PAN-GO" id="O00423">
    <property type="GO annotations" value="3 GO annotations based on evolutionary models"/>
</dbReference>
<dbReference type="PhylomeDB" id="O00423"/>
<dbReference type="TreeFam" id="TF317832"/>
<dbReference type="PathwayCommons" id="O00423"/>
<dbReference type="SignaLink" id="O00423"/>
<dbReference type="BioGRID-ORCS" id="2009">
    <property type="hits" value="10 hits in 1143 CRISPR screens"/>
</dbReference>
<dbReference type="ChiTaRS" id="EML1">
    <property type="organism name" value="human"/>
</dbReference>
<dbReference type="EvolutionaryTrace" id="O00423"/>
<dbReference type="GeneWiki" id="EML1"/>
<dbReference type="GenomeRNAi" id="2009"/>
<dbReference type="Pharos" id="O00423">
    <property type="development level" value="Tbio"/>
</dbReference>
<dbReference type="PRO" id="PR:O00423"/>
<dbReference type="Proteomes" id="UP000005640">
    <property type="component" value="Chromosome 14"/>
</dbReference>
<dbReference type="RNAct" id="O00423">
    <property type="molecule type" value="protein"/>
</dbReference>
<dbReference type="Bgee" id="ENSG00000066629">
    <property type="expression patterns" value="Expressed in cortical plate and 194 other cell types or tissues"/>
</dbReference>
<dbReference type="ExpressionAtlas" id="O00423">
    <property type="expression patterns" value="baseline and differential"/>
</dbReference>
<dbReference type="GO" id="GO:0005829">
    <property type="term" value="C:cytosol"/>
    <property type="evidence" value="ECO:0000250"/>
    <property type="project" value="UniProtKB"/>
</dbReference>
<dbReference type="GO" id="GO:0005874">
    <property type="term" value="C:microtubule"/>
    <property type="evidence" value="ECO:0000314"/>
    <property type="project" value="UniProtKB"/>
</dbReference>
<dbReference type="GO" id="GO:0005875">
    <property type="term" value="C:microtubule associated complex"/>
    <property type="evidence" value="ECO:0000304"/>
    <property type="project" value="ProtInc"/>
</dbReference>
<dbReference type="GO" id="GO:1990023">
    <property type="term" value="C:mitotic spindle midzone"/>
    <property type="evidence" value="ECO:0007669"/>
    <property type="project" value="Ensembl"/>
</dbReference>
<dbReference type="GO" id="GO:0097431">
    <property type="term" value="C:mitotic spindle pole"/>
    <property type="evidence" value="ECO:0007669"/>
    <property type="project" value="Ensembl"/>
</dbReference>
<dbReference type="GO" id="GO:0048471">
    <property type="term" value="C:perinuclear region of cytoplasm"/>
    <property type="evidence" value="ECO:0007669"/>
    <property type="project" value="UniProtKB-SubCell"/>
</dbReference>
<dbReference type="GO" id="GO:0005509">
    <property type="term" value="F:calcium ion binding"/>
    <property type="evidence" value="ECO:0000303"/>
    <property type="project" value="UniProtKB"/>
</dbReference>
<dbReference type="GO" id="GO:0008017">
    <property type="term" value="F:microtubule binding"/>
    <property type="evidence" value="ECO:0000315"/>
    <property type="project" value="UniProtKB"/>
</dbReference>
<dbReference type="GO" id="GO:0015631">
    <property type="term" value="F:tubulin binding"/>
    <property type="evidence" value="ECO:0000314"/>
    <property type="project" value="UniProtKB"/>
</dbReference>
<dbReference type="GO" id="GO:0007420">
    <property type="term" value="P:brain development"/>
    <property type="evidence" value="ECO:0000315"/>
    <property type="project" value="UniProtKB"/>
</dbReference>
<dbReference type="GO" id="GO:0002244">
    <property type="term" value="P:hematopoietic progenitor cell differentiation"/>
    <property type="evidence" value="ECO:0007669"/>
    <property type="project" value="Ensembl"/>
</dbReference>
<dbReference type="GO" id="GO:0000226">
    <property type="term" value="P:microtubule cytoskeleton organization"/>
    <property type="evidence" value="ECO:0000250"/>
    <property type="project" value="UniProtKB"/>
</dbReference>
<dbReference type="GO" id="GO:0007052">
    <property type="term" value="P:mitotic spindle organization"/>
    <property type="evidence" value="ECO:0000250"/>
    <property type="project" value="UniProtKB"/>
</dbReference>
<dbReference type="GO" id="GO:0007405">
    <property type="term" value="P:neuroblast proliferation"/>
    <property type="evidence" value="ECO:0000250"/>
    <property type="project" value="UniProtKB"/>
</dbReference>
<dbReference type="CDD" id="cd21947">
    <property type="entry name" value="TD_EMAP1"/>
    <property type="match status" value="1"/>
</dbReference>
<dbReference type="FunFam" id="2.130.10.10:FF:000011">
    <property type="entry name" value="Echinoderm microtubule-associated protein-like 2 isoform 1"/>
    <property type="match status" value="1"/>
</dbReference>
<dbReference type="FunFam" id="2.130.10.10:FF:000005">
    <property type="entry name" value="Putative echinoderm microtubule-associated protein-like 1"/>
    <property type="match status" value="1"/>
</dbReference>
<dbReference type="Gene3D" id="2.130.10.10">
    <property type="entry name" value="YVTN repeat-like/Quinoprotein amine dehydrogenase"/>
    <property type="match status" value="2"/>
</dbReference>
<dbReference type="InterPro" id="IPR055442">
    <property type="entry name" value="Beta-prop_EML-like_2nd"/>
</dbReference>
<dbReference type="InterPro" id="IPR055439">
    <property type="entry name" value="Beta-prop_EML_1st"/>
</dbReference>
<dbReference type="InterPro" id="IPR005108">
    <property type="entry name" value="HELP"/>
</dbReference>
<dbReference type="InterPro" id="IPR011047">
    <property type="entry name" value="Quinoprotein_ADH-like_sf"/>
</dbReference>
<dbReference type="InterPro" id="IPR015943">
    <property type="entry name" value="WD40/YVTN_repeat-like_dom_sf"/>
</dbReference>
<dbReference type="InterPro" id="IPR036322">
    <property type="entry name" value="WD40_repeat_dom_sf"/>
</dbReference>
<dbReference type="InterPro" id="IPR001680">
    <property type="entry name" value="WD40_rpt"/>
</dbReference>
<dbReference type="InterPro" id="IPR050630">
    <property type="entry name" value="WD_repeat_EMAP"/>
</dbReference>
<dbReference type="PANTHER" id="PTHR13720:SF22">
    <property type="entry name" value="ECHINODERM MICROTUBULE-ASSOCIATED PROTEIN-LIKE 1"/>
    <property type="match status" value="1"/>
</dbReference>
<dbReference type="PANTHER" id="PTHR13720">
    <property type="entry name" value="WD-40 REPEAT PROTEIN"/>
    <property type="match status" value="1"/>
</dbReference>
<dbReference type="Pfam" id="PF23409">
    <property type="entry name" value="Beta-prop_EML"/>
    <property type="match status" value="1"/>
</dbReference>
<dbReference type="Pfam" id="PF23414">
    <property type="entry name" value="Beta-prop_EML_2"/>
    <property type="match status" value="1"/>
</dbReference>
<dbReference type="Pfam" id="PF03451">
    <property type="entry name" value="HELP"/>
    <property type="match status" value="1"/>
</dbReference>
<dbReference type="SMART" id="SM00320">
    <property type="entry name" value="WD40"/>
    <property type="match status" value="10"/>
</dbReference>
<dbReference type="SUPFAM" id="SSF50998">
    <property type="entry name" value="Quinoprotein alcohol dehydrogenase-like"/>
    <property type="match status" value="1"/>
</dbReference>
<dbReference type="SUPFAM" id="SSF50978">
    <property type="entry name" value="WD40 repeat-like"/>
    <property type="match status" value="1"/>
</dbReference>
<dbReference type="PROSITE" id="PS50082">
    <property type="entry name" value="WD_REPEATS_2"/>
    <property type="match status" value="3"/>
</dbReference>
<dbReference type="PROSITE" id="PS50294">
    <property type="entry name" value="WD_REPEATS_REGION"/>
    <property type="match status" value="2"/>
</dbReference>
<proteinExistence type="evidence at protein level"/>
<evidence type="ECO:0000250" key="1">
    <source>
        <dbReference type="UniProtKB" id="Q05BC3"/>
    </source>
</evidence>
<evidence type="ECO:0000250" key="2">
    <source>
        <dbReference type="UniProtKB" id="Q9HC35"/>
    </source>
</evidence>
<evidence type="ECO:0000255" key="3"/>
<evidence type="ECO:0000256" key="4">
    <source>
        <dbReference type="SAM" id="MobiDB-lite"/>
    </source>
</evidence>
<evidence type="ECO:0000269" key="5">
    <source>
    </source>
</evidence>
<evidence type="ECO:0000269" key="6">
    <source>
    </source>
</evidence>
<evidence type="ECO:0000269" key="7">
    <source>
    </source>
</evidence>
<evidence type="ECO:0000269" key="8">
    <source>
    </source>
</evidence>
<evidence type="ECO:0000269" key="9">
    <source>
    </source>
</evidence>
<evidence type="ECO:0000269" key="10">
    <source>
    </source>
</evidence>
<evidence type="ECO:0000269" key="11">
    <source>
    </source>
</evidence>
<evidence type="ECO:0000269" key="12">
    <source ref="2"/>
</evidence>
<evidence type="ECO:0000303" key="13">
    <source ref="4"/>
</evidence>
<evidence type="ECO:0000305" key="14"/>
<evidence type="ECO:0007744" key="15">
    <source>
    </source>
</evidence>
<evidence type="ECO:0007829" key="16">
    <source>
        <dbReference type="PDB" id="4CI8"/>
    </source>
</evidence>
<reference key="1">
    <citation type="journal article" date="1997" name="Genomics">
        <title>Isolation of a novel human homologue of the gene coding for echinoderm microtubule-associated protein (EMAP) from the Usher syndrome type 1a locus at 14q32.</title>
        <authorList>
            <person name="Eudy J.D."/>
            <person name="Ma-Edmonds M."/>
            <person name="Yao S.F."/>
            <person name="Talmadge C.B."/>
            <person name="Kelley P.M."/>
            <person name="Weston M.D."/>
            <person name="Kimberling W.J."/>
            <person name="Sumegi J."/>
        </authorList>
    </citation>
    <scope>NUCLEOTIDE SEQUENCE [MRNA] (ISOFORM 1)</scope>
    <scope>VARIANT PRO-556</scope>
</reference>
<reference key="2">
    <citation type="submission" date="2002-07" db="EMBL/GenBank/DDBJ databases">
        <title>Complete exon-intron structure of human homologue of the gene coding the echinoderm microtubule-associated protein (EMAP).</title>
        <authorList>
            <person name="Gerber S."/>
            <person name="Sumegi J."/>
            <person name="Rozet J.-M."/>
            <person name="Perrault I."/>
            <person name="Ducroq D."/>
            <person name="Munnich A."/>
            <person name="Kaplan J."/>
        </authorList>
    </citation>
    <scope>NUCLEOTIDE SEQUENCE [GENOMIC DNA]</scope>
    <scope>VARIANT PRO-556</scope>
</reference>
<reference key="3">
    <citation type="journal article" date="2004" name="Genome Res.">
        <title>The status, quality, and expansion of the NIH full-length cDNA project: the Mammalian Gene Collection (MGC).</title>
        <authorList>
            <consortium name="The MGC Project Team"/>
        </authorList>
    </citation>
    <scope>NUCLEOTIDE SEQUENCE [LARGE SCALE MRNA] (ISOFORM 1)</scope>
    <scope>VARIANTS ASN-552 AND PRO-556</scope>
    <source>
        <tissue>Brain</tissue>
        <tissue>Uterus</tissue>
    </source>
</reference>
<reference key="4">
    <citation type="submission" date="2003-02" db="EMBL/GenBank/DDBJ databases">
        <title>Full-length cDNA libraries and normalization.</title>
        <authorList>
            <person name="Li W.B."/>
            <person name="Gruber C."/>
            <person name="Jessee J."/>
            <person name="Polayes D."/>
        </authorList>
    </citation>
    <scope>NUCLEOTIDE SEQUENCE [LARGE SCALE MRNA] OF 1-500 (ISOFORM 3)</scope>
    <source>
        <tissue>Fetal brain</tissue>
    </source>
</reference>
<reference key="5">
    <citation type="journal article" date="1999" name="Gene">
        <title>Sequence and expression patterns of a human EMAP-related protein-2 (HuEMAP-2).</title>
        <authorList>
            <person name="Lepley D.M."/>
            <person name="Palange J.M."/>
            <person name="Suprenant K.A."/>
        </authorList>
    </citation>
    <scope>TISSUE SPECIFICITY</scope>
</reference>
<reference key="6">
    <citation type="journal article" date="2014" name="J. Proteomics">
        <title>An enzyme assisted RP-RPLC approach for in-depth analysis of human liver phosphoproteome.</title>
        <authorList>
            <person name="Bian Y."/>
            <person name="Song C."/>
            <person name="Cheng K."/>
            <person name="Dong M."/>
            <person name="Wang F."/>
            <person name="Huang J."/>
            <person name="Sun D."/>
            <person name="Wang L."/>
            <person name="Ye M."/>
            <person name="Zou H."/>
        </authorList>
    </citation>
    <scope>PHOSPHORYLATION [LARGE SCALE ANALYSIS] AT SER-113</scope>
    <scope>IDENTIFICATION BY MASS SPECTROMETRY [LARGE SCALE ANALYSIS]</scope>
    <source>
        <tissue>Liver</tissue>
    </source>
</reference>
<reference key="7">
    <citation type="journal article" date="2015" name="Biochem. J.">
        <title>Microtubule association of EML proteins and the EML4-ALK variant 3 oncoprotein require an N-terminal trimerization domain.</title>
        <authorList>
            <person name="Richards M.W."/>
            <person name="O'Regan L."/>
            <person name="Roth D."/>
            <person name="Montgomery J.M."/>
            <person name="Straube A."/>
            <person name="Fry A.M."/>
            <person name="Bayliss R."/>
        </authorList>
    </citation>
    <scope>SUBCELLULAR LOCATION</scope>
    <scope>DOMAIN</scope>
    <scope>MUTAGENESIS OF 59-LEU--ASP-61</scope>
</reference>
<reference key="8">
    <citation type="journal article" date="2014" name="Nat. Neurosci.">
        <title>Mutations in Eml1 lead to ectopic progenitors and neuronal heterotopia in mouse and human.</title>
        <authorList>
            <person name="Kielar M."/>
            <person name="Tuy F.P."/>
            <person name="Bizzotto S."/>
            <person name="Lebrand C."/>
            <person name="de Juan Romero C."/>
            <person name="Poirier K."/>
            <person name="Oegema R."/>
            <person name="Mancini G.M."/>
            <person name="Bahi-Buisson N."/>
            <person name="Olaso R."/>
            <person name="Le Moing A.G."/>
            <person name="Boutourlinsky K."/>
            <person name="Boucher D."/>
            <person name="Carpentier W."/>
            <person name="Berquin P."/>
            <person name="Deleuze J.F."/>
            <person name="Belvindrah R."/>
            <person name="Borrell V."/>
            <person name="Welker E."/>
            <person name="Chelly J."/>
            <person name="Croquelois A."/>
            <person name="Francis F."/>
        </authorList>
    </citation>
    <scope>INVOLVEMENT IN BH</scope>
    <scope>VARIANTS BH ARG-225 AND ALA-243</scope>
    <scope>CHARACTERIZATION OF VARIANT BH ALA-243</scope>
    <scope>SUBUNIT</scope>
    <scope>SUBCELLULAR LOCATION</scope>
</reference>
<reference key="9">
    <citation type="journal article" date="2017" name="Ann. Neurol.">
        <title>The genetic landscape of familial congenital hydrocephalus.</title>
        <authorList>
            <person name="Shaheen R."/>
            <person name="Sebai M.A."/>
            <person name="Patel N."/>
            <person name="Ewida N."/>
            <person name="Kurdi W."/>
            <person name="Altweijri I."/>
            <person name="Sogaty S."/>
            <person name="Almardawi E."/>
            <person name="Seidahmed M.Z."/>
            <person name="Alnemri A."/>
            <person name="Madirevula S."/>
            <person name="Ibrahim N."/>
            <person name="Abdulwahab F."/>
            <person name="Hashem M."/>
            <person name="Al-Sheddi T."/>
            <person name="Alomar R."/>
            <person name="Alobeid E."/>
            <person name="Sallout B."/>
            <person name="AlBaqawi B."/>
            <person name="AlAali W."/>
            <person name="Ajaji N."/>
            <person name="Lesmana H."/>
            <person name="Hopkin R.J."/>
            <person name="Dupuis L."/>
            <person name="Mendoza-Londono R."/>
            <person name="Al Rukban H."/>
            <person name="Yoon G."/>
            <person name="Faqeih E."/>
            <person name="Alkuraya F.S."/>
        </authorList>
    </citation>
    <scope>INVOLVEMENT IN BH</scope>
    <scope>VARIANT BH 523-ARG--ILE-815 DEL</scope>
</reference>
<reference key="10">
    <citation type="journal article" date="2014" name="Proc. Natl. Acad. Sci. U.S.A.">
        <title>Crystal structure of EML1 reveals the basis for Hsp90 dependence of oncogenic EML4-ALK by disruption of an atypical beta-propeller domain.</title>
        <authorList>
            <person name="Richards M.W."/>
            <person name="Law E.W."/>
            <person name="Rennalls L.P."/>
            <person name="Busacca S."/>
            <person name="O'Regan L."/>
            <person name="Fry A.M."/>
            <person name="Fennell D.A."/>
            <person name="Bayliss R."/>
        </authorList>
    </citation>
    <scope>X-RAY CRYSTALLOGRAPHY (2.60 ANGSTROMS) OF 167-815</scope>
    <scope>DOMAIN</scope>
    <scope>INTERACTION WITH TUBULIN</scope>
    <scope>MUTAGENESIS OF 59-LEU--ASP-61; ARG-192; ARG-194; TRP-547; ASN-626; GLU-627; HIS-646 AND HIS-786</scope>
</reference>
<keyword id="KW-0002">3D-structure</keyword>
<keyword id="KW-0025">Alternative splicing</keyword>
<keyword id="KW-0175">Coiled coil</keyword>
<keyword id="KW-0963">Cytoplasm</keyword>
<keyword id="KW-0206">Cytoskeleton</keyword>
<keyword id="KW-0225">Disease variant</keyword>
<keyword id="KW-0887">Epilepsy</keyword>
<keyword id="KW-0991">Intellectual disability</keyword>
<keyword id="KW-0451">Lissencephaly</keyword>
<keyword id="KW-0493">Microtubule</keyword>
<keyword id="KW-0597">Phosphoprotein</keyword>
<keyword id="KW-1267">Proteomics identification</keyword>
<keyword id="KW-1185">Reference proteome</keyword>
<keyword id="KW-0677">Repeat</keyword>
<keyword id="KW-0853">WD repeat</keyword>